<keyword id="KW-0325">Glycoprotein</keyword>
<keyword id="KW-0472">Membrane</keyword>
<keyword id="KW-1185">Reference proteome</keyword>
<keyword id="KW-0812">Transmembrane</keyword>
<keyword id="KW-1133">Transmembrane helix</keyword>
<accession>Q5RCV1</accession>
<sequence length="496" mass="55753">MAGEITETGELYSSYVGLVYMFNLIVGTGALTMPKAFATAGWLVSLVLLVFLGFMSFVTTTFVIEAMAAANAQLRWKRMENLKEEEDDDSSTASDSDVLIRDNYERAEKRPILSVQRRGSPNPFEITDRVEMGQMASMFFNKVGVNLFYFCIIVYLYGDLAIYAAAVPFSLMQVTCSATGNDSCGVEADTKYNDTDRCWGPLRRVDAYRIYLAIFTLLLGPFTFFDVQKTKYLQILTSLMRWIAFAVMIVLALVRIGHRQGEGHPPLADFSGVRNLFGVCVYSFMCQHSLPSLITPVSSKRHLTRLVFLDYVLILAFYGLLSFTAIFCFRGDSLMDMYTLNFARCDIVGLAAVRFFLGLFPVFTISTNFPIIAVTLRNNWKTLFHREGGTYPWVVDRVVFPTITLVPPVLVAFCTHDLESLVGITGAYAGTGIQYVIPAFLVYHCRRDTQLAFGCGVGNKHRSPFRHTFWVGFVLLWAFSCFIFVTANIVLSETKL</sequence>
<evidence type="ECO:0000255" key="1"/>
<evidence type="ECO:0000305" key="2"/>
<comment type="subcellular location">
    <subcellularLocation>
        <location evidence="2">Membrane</location>
        <topology evidence="2">Multi-pass membrane protein</topology>
    </subcellularLocation>
</comment>
<comment type="similarity">
    <text evidence="2">Belongs to the TMEM104 family.</text>
</comment>
<feature type="chain" id="PRO_0000254180" description="Transmembrane protein 104">
    <location>
        <begin position="1"/>
        <end position="496"/>
    </location>
</feature>
<feature type="topological domain" description="Cytoplasmic" evidence="1">
    <location>
        <begin position="1"/>
        <end position="10"/>
    </location>
</feature>
<feature type="transmembrane region" description="Helical" evidence="1">
    <location>
        <begin position="11"/>
        <end position="31"/>
    </location>
</feature>
<feature type="topological domain" description="Extracellular" evidence="1">
    <location>
        <begin position="32"/>
        <end position="36"/>
    </location>
</feature>
<feature type="transmembrane region" description="Helical" evidence="1">
    <location>
        <begin position="37"/>
        <end position="57"/>
    </location>
</feature>
<feature type="topological domain" description="Cytoplasmic" evidence="1">
    <location>
        <begin position="58"/>
        <end position="146"/>
    </location>
</feature>
<feature type="transmembrane region" description="Helical" evidence="1">
    <location>
        <begin position="147"/>
        <end position="167"/>
    </location>
</feature>
<feature type="topological domain" description="Extracellular" evidence="1">
    <location>
        <begin position="168"/>
        <end position="204"/>
    </location>
</feature>
<feature type="transmembrane region" description="Helical" evidence="1">
    <location>
        <begin position="205"/>
        <end position="225"/>
    </location>
</feature>
<feature type="topological domain" description="Cytoplasmic" evidence="1">
    <location>
        <begin position="226"/>
        <end position="233"/>
    </location>
</feature>
<feature type="transmembrane region" description="Helical" evidence="1">
    <location>
        <begin position="234"/>
        <end position="254"/>
    </location>
</feature>
<feature type="topological domain" description="Extracellular" evidence="1">
    <location>
        <begin position="255"/>
        <end position="276"/>
    </location>
</feature>
<feature type="transmembrane region" description="Helical" evidence="1">
    <location>
        <begin position="277"/>
        <end position="297"/>
    </location>
</feature>
<feature type="topological domain" description="Cytoplasmic" evidence="1">
    <location>
        <begin position="298"/>
        <end position="306"/>
    </location>
</feature>
<feature type="transmembrane region" description="Helical" evidence="1">
    <location>
        <begin position="307"/>
        <end position="327"/>
    </location>
</feature>
<feature type="topological domain" description="Extracellular" evidence="1">
    <location>
        <begin position="328"/>
        <end position="354"/>
    </location>
</feature>
<feature type="transmembrane region" description="Helical" evidence="1">
    <location>
        <begin position="355"/>
        <end position="375"/>
    </location>
</feature>
<feature type="topological domain" description="Cytoplasmic" evidence="1">
    <location>
        <begin position="376"/>
        <end position="397"/>
    </location>
</feature>
<feature type="transmembrane region" description="Helical" evidence="1">
    <location>
        <begin position="398"/>
        <end position="418"/>
    </location>
</feature>
<feature type="topological domain" description="Extracellular" evidence="1">
    <location>
        <begin position="419"/>
        <end position="421"/>
    </location>
</feature>
<feature type="transmembrane region" description="Helical" evidence="1">
    <location>
        <begin position="422"/>
        <end position="442"/>
    </location>
</feature>
<feature type="topological domain" description="Cytoplasmic" evidence="1">
    <location>
        <begin position="443"/>
        <end position="470"/>
    </location>
</feature>
<feature type="transmembrane region" description="Helical" evidence="1">
    <location>
        <begin position="471"/>
        <end position="491"/>
    </location>
</feature>
<feature type="topological domain" description="Extracellular" evidence="1">
    <location>
        <begin position="492"/>
        <end position="496"/>
    </location>
</feature>
<feature type="glycosylation site" description="N-linked (GlcNAc...) asparagine" evidence="1">
    <location>
        <position position="193"/>
    </location>
</feature>
<proteinExistence type="evidence at transcript level"/>
<dbReference type="EMBL" id="CR858167">
    <property type="protein sequence ID" value="CAH90406.1"/>
    <property type="molecule type" value="mRNA"/>
</dbReference>
<dbReference type="RefSeq" id="NP_001125201.1">
    <property type="nucleotide sequence ID" value="NM_001131729.1"/>
</dbReference>
<dbReference type="FunCoup" id="Q5RCV1">
    <property type="interactions" value="116"/>
</dbReference>
<dbReference type="GlyCosmos" id="Q5RCV1">
    <property type="glycosylation" value="1 site, No reported glycans"/>
</dbReference>
<dbReference type="GeneID" id="100172092"/>
<dbReference type="KEGG" id="pon:100172092"/>
<dbReference type="CTD" id="54868"/>
<dbReference type="eggNOG" id="KOG3832">
    <property type="taxonomic scope" value="Eukaryota"/>
</dbReference>
<dbReference type="InParanoid" id="Q5RCV1"/>
<dbReference type="OrthoDB" id="294541at2759"/>
<dbReference type="Proteomes" id="UP000001595">
    <property type="component" value="Unplaced"/>
</dbReference>
<dbReference type="GO" id="GO:0016020">
    <property type="term" value="C:membrane"/>
    <property type="evidence" value="ECO:0007669"/>
    <property type="project" value="UniProtKB-SubCell"/>
</dbReference>
<dbReference type="Gene3D" id="1.20.1740.10">
    <property type="entry name" value="Amino acid/polyamine transporter I"/>
    <property type="match status" value="1"/>
</dbReference>
<dbReference type="InterPro" id="IPR013057">
    <property type="entry name" value="AA_transpt_TM"/>
</dbReference>
<dbReference type="PANTHER" id="PTHR16189:SF0">
    <property type="entry name" value="TRANSMEMBRANE PROTEIN 104"/>
    <property type="match status" value="1"/>
</dbReference>
<dbReference type="PANTHER" id="PTHR16189">
    <property type="entry name" value="TRANSMEMBRANE PROTEIN 104-RELATED"/>
    <property type="match status" value="1"/>
</dbReference>
<dbReference type="Pfam" id="PF01490">
    <property type="entry name" value="Aa_trans"/>
    <property type="match status" value="2"/>
</dbReference>
<organism>
    <name type="scientific">Pongo abelii</name>
    <name type="common">Sumatran orangutan</name>
    <name type="synonym">Pongo pygmaeus abelii</name>
    <dbReference type="NCBI Taxonomy" id="9601"/>
    <lineage>
        <taxon>Eukaryota</taxon>
        <taxon>Metazoa</taxon>
        <taxon>Chordata</taxon>
        <taxon>Craniata</taxon>
        <taxon>Vertebrata</taxon>
        <taxon>Euteleostomi</taxon>
        <taxon>Mammalia</taxon>
        <taxon>Eutheria</taxon>
        <taxon>Euarchontoglires</taxon>
        <taxon>Primates</taxon>
        <taxon>Haplorrhini</taxon>
        <taxon>Catarrhini</taxon>
        <taxon>Hominidae</taxon>
        <taxon>Pongo</taxon>
    </lineage>
</organism>
<protein>
    <recommendedName>
        <fullName>Transmembrane protein 104</fullName>
    </recommendedName>
</protein>
<name>TM104_PONAB</name>
<gene>
    <name type="primary">TMEM104</name>
</gene>
<reference key="1">
    <citation type="submission" date="2004-11" db="EMBL/GenBank/DDBJ databases">
        <authorList>
            <consortium name="The German cDNA consortium"/>
        </authorList>
    </citation>
    <scope>NUCLEOTIDE SEQUENCE [LARGE SCALE MRNA]</scope>
    <source>
        <tissue>Kidney</tissue>
    </source>
</reference>